<accession>B0SA40</accession>
<name>RL16_LEPBA</name>
<keyword id="KW-0687">Ribonucleoprotein</keyword>
<keyword id="KW-0689">Ribosomal protein</keyword>
<keyword id="KW-0694">RNA-binding</keyword>
<keyword id="KW-0699">rRNA-binding</keyword>
<keyword id="KW-0820">tRNA-binding</keyword>
<dbReference type="EMBL" id="CP000777">
    <property type="protein sequence ID" value="ABZ94410.1"/>
    <property type="molecule type" value="Genomic_DNA"/>
</dbReference>
<dbReference type="RefSeq" id="WP_012388934.1">
    <property type="nucleotide sequence ID" value="NC_010842.1"/>
</dbReference>
<dbReference type="SMR" id="B0SA40"/>
<dbReference type="KEGG" id="lbf:LBF_1906"/>
<dbReference type="HOGENOM" id="CLU_078858_2_1_12"/>
<dbReference type="GO" id="GO:0022625">
    <property type="term" value="C:cytosolic large ribosomal subunit"/>
    <property type="evidence" value="ECO:0007669"/>
    <property type="project" value="TreeGrafter"/>
</dbReference>
<dbReference type="GO" id="GO:0019843">
    <property type="term" value="F:rRNA binding"/>
    <property type="evidence" value="ECO:0007669"/>
    <property type="project" value="UniProtKB-UniRule"/>
</dbReference>
<dbReference type="GO" id="GO:0003735">
    <property type="term" value="F:structural constituent of ribosome"/>
    <property type="evidence" value="ECO:0007669"/>
    <property type="project" value="InterPro"/>
</dbReference>
<dbReference type="GO" id="GO:0000049">
    <property type="term" value="F:tRNA binding"/>
    <property type="evidence" value="ECO:0007669"/>
    <property type="project" value="UniProtKB-KW"/>
</dbReference>
<dbReference type="GO" id="GO:0006412">
    <property type="term" value="P:translation"/>
    <property type="evidence" value="ECO:0007669"/>
    <property type="project" value="UniProtKB-UniRule"/>
</dbReference>
<dbReference type="CDD" id="cd01433">
    <property type="entry name" value="Ribosomal_L16_L10e"/>
    <property type="match status" value="1"/>
</dbReference>
<dbReference type="FunFam" id="3.90.1170.10:FF:000001">
    <property type="entry name" value="50S ribosomal protein L16"/>
    <property type="match status" value="1"/>
</dbReference>
<dbReference type="Gene3D" id="3.90.1170.10">
    <property type="entry name" value="Ribosomal protein L10e/L16"/>
    <property type="match status" value="1"/>
</dbReference>
<dbReference type="HAMAP" id="MF_01342">
    <property type="entry name" value="Ribosomal_uL16"/>
    <property type="match status" value="1"/>
</dbReference>
<dbReference type="InterPro" id="IPR047873">
    <property type="entry name" value="Ribosomal_uL16"/>
</dbReference>
<dbReference type="InterPro" id="IPR000114">
    <property type="entry name" value="Ribosomal_uL16_bact-type"/>
</dbReference>
<dbReference type="InterPro" id="IPR020798">
    <property type="entry name" value="Ribosomal_uL16_CS"/>
</dbReference>
<dbReference type="InterPro" id="IPR016180">
    <property type="entry name" value="Ribosomal_uL16_dom"/>
</dbReference>
<dbReference type="InterPro" id="IPR036920">
    <property type="entry name" value="Ribosomal_uL16_sf"/>
</dbReference>
<dbReference type="NCBIfam" id="TIGR01164">
    <property type="entry name" value="rplP_bact"/>
    <property type="match status" value="1"/>
</dbReference>
<dbReference type="PANTHER" id="PTHR12220">
    <property type="entry name" value="50S/60S RIBOSOMAL PROTEIN L16"/>
    <property type="match status" value="1"/>
</dbReference>
<dbReference type="PANTHER" id="PTHR12220:SF13">
    <property type="entry name" value="LARGE RIBOSOMAL SUBUNIT PROTEIN UL16M"/>
    <property type="match status" value="1"/>
</dbReference>
<dbReference type="Pfam" id="PF00252">
    <property type="entry name" value="Ribosomal_L16"/>
    <property type="match status" value="1"/>
</dbReference>
<dbReference type="PRINTS" id="PR00060">
    <property type="entry name" value="RIBOSOMALL16"/>
</dbReference>
<dbReference type="SUPFAM" id="SSF54686">
    <property type="entry name" value="Ribosomal protein L16p/L10e"/>
    <property type="match status" value="1"/>
</dbReference>
<dbReference type="PROSITE" id="PS00586">
    <property type="entry name" value="RIBOSOMAL_L16_1"/>
    <property type="match status" value="1"/>
</dbReference>
<dbReference type="PROSITE" id="PS00701">
    <property type="entry name" value="RIBOSOMAL_L16_2"/>
    <property type="match status" value="1"/>
</dbReference>
<feature type="chain" id="PRO_1000142989" description="Large ribosomal subunit protein uL16">
    <location>
        <begin position="1"/>
        <end position="137"/>
    </location>
</feature>
<proteinExistence type="inferred from homology"/>
<reference key="1">
    <citation type="journal article" date="2008" name="PLoS ONE">
        <title>Genome sequence of the saprophyte Leptospira biflexa provides insights into the evolution of Leptospira and the pathogenesis of leptospirosis.</title>
        <authorList>
            <person name="Picardeau M."/>
            <person name="Bulach D.M."/>
            <person name="Bouchier C."/>
            <person name="Zuerner R.L."/>
            <person name="Zidane N."/>
            <person name="Wilson P.J."/>
            <person name="Creno S."/>
            <person name="Kuczek E.S."/>
            <person name="Bommezzadri S."/>
            <person name="Davis J.C."/>
            <person name="McGrath A."/>
            <person name="Johnson M.J."/>
            <person name="Boursaux-Eude C."/>
            <person name="Seemann T."/>
            <person name="Rouy Z."/>
            <person name="Coppel R.L."/>
            <person name="Rood J.I."/>
            <person name="Lajus A."/>
            <person name="Davies J.K."/>
            <person name="Medigue C."/>
            <person name="Adler B."/>
        </authorList>
    </citation>
    <scope>NUCLEOTIDE SEQUENCE [LARGE SCALE GENOMIC DNA]</scope>
    <source>
        <strain>Patoc 1 / Ames</strain>
    </source>
</reference>
<sequence length="137" mass="15581">MLAPKRVKFRKRQRGRLKGKDERGSYVAFGEFGLKAISSGRITARQIEAARITINRQVKRGGKLWIRIFPHLPITKKPAETRMGKGKGNPEFWIAEIRPGRVLFEMAGVDEETARKALHLAAFKLPVETSFVKRNVL</sequence>
<organism>
    <name type="scientific">Leptospira biflexa serovar Patoc (strain Patoc 1 / Ames)</name>
    <dbReference type="NCBI Taxonomy" id="355278"/>
    <lineage>
        <taxon>Bacteria</taxon>
        <taxon>Pseudomonadati</taxon>
        <taxon>Spirochaetota</taxon>
        <taxon>Spirochaetia</taxon>
        <taxon>Leptospirales</taxon>
        <taxon>Leptospiraceae</taxon>
        <taxon>Leptospira</taxon>
    </lineage>
</organism>
<gene>
    <name evidence="1" type="primary">rplP</name>
    <name type="ordered locus">LBF_1906</name>
</gene>
<protein>
    <recommendedName>
        <fullName evidence="1">Large ribosomal subunit protein uL16</fullName>
    </recommendedName>
    <alternativeName>
        <fullName evidence="2">50S ribosomal protein L16</fullName>
    </alternativeName>
</protein>
<comment type="function">
    <text evidence="1">Binds 23S rRNA and is also seen to make contacts with the A and possibly P site tRNAs.</text>
</comment>
<comment type="subunit">
    <text evidence="1">Part of the 50S ribosomal subunit.</text>
</comment>
<comment type="similarity">
    <text evidence="1">Belongs to the universal ribosomal protein uL16 family.</text>
</comment>
<evidence type="ECO:0000255" key="1">
    <source>
        <dbReference type="HAMAP-Rule" id="MF_01342"/>
    </source>
</evidence>
<evidence type="ECO:0000305" key="2"/>